<comment type="function">
    <text evidence="1">Cell division inhibitor that blocks the formation of polar Z ring septums. Rapidly oscillates between the poles of the cell to destabilize FtsZ filaments that have formed before they mature into polar Z rings. Prevents FtsZ polymerization.</text>
</comment>
<comment type="subunit">
    <text evidence="1">Interacts with MinD and FtsZ.</text>
</comment>
<comment type="similarity">
    <text evidence="1">Belongs to the MinC family.</text>
</comment>
<reference key="1">
    <citation type="submission" date="2008-02" db="EMBL/GenBank/DDBJ databases">
        <title>Complete sequence of Yersinia pseudotuberculosis YPIII.</title>
        <authorList>
            <consortium name="US DOE Joint Genome Institute"/>
            <person name="Copeland A."/>
            <person name="Lucas S."/>
            <person name="Lapidus A."/>
            <person name="Glavina del Rio T."/>
            <person name="Dalin E."/>
            <person name="Tice H."/>
            <person name="Bruce D."/>
            <person name="Goodwin L."/>
            <person name="Pitluck S."/>
            <person name="Munk A.C."/>
            <person name="Brettin T."/>
            <person name="Detter J.C."/>
            <person name="Han C."/>
            <person name="Tapia R."/>
            <person name="Schmutz J."/>
            <person name="Larimer F."/>
            <person name="Land M."/>
            <person name="Hauser L."/>
            <person name="Challacombe J.F."/>
            <person name="Green L."/>
            <person name="Lindler L.E."/>
            <person name="Nikolich M.P."/>
            <person name="Richardson P."/>
        </authorList>
    </citation>
    <scope>NUCLEOTIDE SEQUENCE [LARGE SCALE GENOMIC DNA]</scope>
    <source>
        <strain>YPIII</strain>
    </source>
</reference>
<proteinExistence type="inferred from homology"/>
<organism>
    <name type="scientific">Yersinia pseudotuberculosis serotype O:3 (strain YPIII)</name>
    <dbReference type="NCBI Taxonomy" id="502800"/>
    <lineage>
        <taxon>Bacteria</taxon>
        <taxon>Pseudomonadati</taxon>
        <taxon>Pseudomonadota</taxon>
        <taxon>Gammaproteobacteria</taxon>
        <taxon>Enterobacterales</taxon>
        <taxon>Yersiniaceae</taxon>
        <taxon>Yersinia</taxon>
    </lineage>
</organism>
<feature type="chain" id="PRO_1000114305" description="Probable septum site-determining protein MinC">
    <location>
        <begin position="1"/>
        <end position="228"/>
    </location>
</feature>
<keyword id="KW-0131">Cell cycle</keyword>
<keyword id="KW-0132">Cell division</keyword>
<keyword id="KW-0717">Septation</keyword>
<protein>
    <recommendedName>
        <fullName evidence="1">Probable septum site-determining protein MinC</fullName>
    </recommendedName>
</protein>
<gene>
    <name evidence="1" type="primary">minC</name>
    <name type="ordered locus">YPK_2121</name>
</gene>
<accession>B1JLI8</accession>
<sequence length="228" mass="24546">MSQSPIELKGSSFTLSVVHLHDSRPEVIRQALQEKVDQAPAFLKNAPVVINVATLPNGANWKDLQQAVTSAGLRIVGISGCQDERQKRAIARAGLPLLSEGKGQKLAPEPVISPPENVPTQTRIINTPVRSGQQIYARNCDLIVISSVSAGAELIADGNIHIYGMMRGRALAGASGDAKCQIFCTHLGAELVSIAGQYWLSDQIPLEYFGQAARLYLQDNTLTIQPLN</sequence>
<dbReference type="EMBL" id="CP000950">
    <property type="protein sequence ID" value="ACA68407.1"/>
    <property type="molecule type" value="Genomic_DNA"/>
</dbReference>
<dbReference type="RefSeq" id="WP_002220631.1">
    <property type="nucleotide sequence ID" value="NZ_CP009792.1"/>
</dbReference>
<dbReference type="SMR" id="B1JLI8"/>
<dbReference type="GeneID" id="96665552"/>
<dbReference type="KEGG" id="ypy:YPK_2121"/>
<dbReference type="PATRIC" id="fig|502800.11.peg.2795"/>
<dbReference type="GO" id="GO:0000902">
    <property type="term" value="P:cell morphogenesis"/>
    <property type="evidence" value="ECO:0007669"/>
    <property type="project" value="InterPro"/>
</dbReference>
<dbReference type="GO" id="GO:0000917">
    <property type="term" value="P:division septum assembly"/>
    <property type="evidence" value="ECO:0007669"/>
    <property type="project" value="UniProtKB-KW"/>
</dbReference>
<dbReference type="GO" id="GO:0051302">
    <property type="term" value="P:regulation of cell division"/>
    <property type="evidence" value="ECO:0007669"/>
    <property type="project" value="InterPro"/>
</dbReference>
<dbReference type="GO" id="GO:1901891">
    <property type="term" value="P:regulation of cell septum assembly"/>
    <property type="evidence" value="ECO:0007669"/>
    <property type="project" value="InterPro"/>
</dbReference>
<dbReference type="FunFam" id="2.160.20.70:FF:000002">
    <property type="entry name" value="Probable septum site-determining protein MinC"/>
    <property type="match status" value="1"/>
</dbReference>
<dbReference type="Gene3D" id="2.160.20.70">
    <property type="match status" value="1"/>
</dbReference>
<dbReference type="Gene3D" id="3.30.70.260">
    <property type="match status" value="1"/>
</dbReference>
<dbReference type="HAMAP" id="MF_00267">
    <property type="entry name" value="MinC"/>
    <property type="match status" value="1"/>
</dbReference>
<dbReference type="InterPro" id="IPR016098">
    <property type="entry name" value="CAP/MinC_C"/>
</dbReference>
<dbReference type="InterPro" id="IPR013033">
    <property type="entry name" value="MinC"/>
</dbReference>
<dbReference type="InterPro" id="IPR036145">
    <property type="entry name" value="MinC_C_sf"/>
</dbReference>
<dbReference type="InterPro" id="IPR007874">
    <property type="entry name" value="MinC_N"/>
</dbReference>
<dbReference type="InterPro" id="IPR005526">
    <property type="entry name" value="Septum_form_inhib_MinC_C"/>
</dbReference>
<dbReference type="NCBIfam" id="TIGR01222">
    <property type="entry name" value="minC"/>
    <property type="match status" value="1"/>
</dbReference>
<dbReference type="PANTHER" id="PTHR34108">
    <property type="entry name" value="SEPTUM SITE-DETERMINING PROTEIN MINC"/>
    <property type="match status" value="1"/>
</dbReference>
<dbReference type="PANTHER" id="PTHR34108:SF1">
    <property type="entry name" value="SEPTUM SITE-DETERMINING PROTEIN MINC"/>
    <property type="match status" value="1"/>
</dbReference>
<dbReference type="Pfam" id="PF03775">
    <property type="entry name" value="MinC_C"/>
    <property type="match status" value="1"/>
</dbReference>
<dbReference type="Pfam" id="PF05209">
    <property type="entry name" value="MinC_N"/>
    <property type="match status" value="1"/>
</dbReference>
<dbReference type="SUPFAM" id="SSF63848">
    <property type="entry name" value="Cell-division inhibitor MinC, C-terminal domain"/>
    <property type="match status" value="1"/>
</dbReference>
<evidence type="ECO:0000255" key="1">
    <source>
        <dbReference type="HAMAP-Rule" id="MF_00267"/>
    </source>
</evidence>
<name>MINC_YERPY</name>